<comment type="function">
    <text evidence="3 4">Cell surface receptor that regulates diverse cellular processes including cell proliferation, differentiation, migration, and apoptosis. Initiates BMP, inhibin, and TGF-beta signaling pathways by interacting with different ligands including TGFB1, BMP2, BMP5, BMP7 or GDF5. Alternatively, acts as a cell surface coreceptor for BMP ligands, serving to enhance ligand binding by differentially regulating BMPR1A/ALK3 and BMPR1B/ALK6 receptor trafficking. Promotes epithelial cell adhesion, focal adhesion formation and integrin signaling during epithelial cell spreading on fibronectin. By interacting with the scaffolding protein beta-arrestin2/ARRB2, regulates migration or actin cytoskeleton and promotes the activation of CDC42 as well as the inhibition of NF-kappa-B (By similarity). In gonadotrope cells, acts as an inhibin A coreceptor and regulates follicle-stimulating hormone (FSH) levels and female fertility (By similarity). Plays a role in the inhibition of directed and random cell migration in epithelial cells by altering the actin cytoskeletal organization (By similarity). Participates in epithelial-mesenchymal transformation (EMT) upon binding to BMP2 or TGFB2, by activating the PAR6/SMURF1/RHOA pathway (By similarity).</text>
</comment>
<comment type="subunit">
    <text evidence="4">Forms homodimers and homooligomers. Interacts with DYNLT4. Interacts with integrin ITGA5:ITGB1; this interaction promotes the internalization and trafficking of ITGA5:ITGB1 into endocytic vesicles. Interacts with TGFB1, BMP2, BMP5, BMP7 or GDF5 and inhibin A via the ligand binding domains. Interacts with ALK3/BMPR1A; this interaction results in the cell surface retention of BMPR1A. Interacts with ALK6/BMPR1B; this interaction enhances BMPR1B-mediated stimulation of the BMP signaling pathway. Interacts with the scaffolding protein beta-arrestin2/ARRB2; this interaction mediates internalization of TGFBR3 and thus regulates migration, actin cytoskeleton and activation of CDC42.</text>
</comment>
<comment type="subcellular location">
    <subcellularLocation>
        <location evidence="3">Cell membrane</location>
        <topology evidence="5">Single-pass type I membrane protein</topology>
    </subcellularLocation>
    <subcellularLocation>
        <location evidence="3">Secreted</location>
    </subcellularLocation>
    <subcellularLocation>
        <location evidence="3">Secreted</location>
        <location evidence="3">Extracellular space</location>
        <location evidence="3">Extracellular matrix</location>
    </subcellularLocation>
    <text evidence="3">Exists both as a membrane-bound form and as soluble form in serum and in the extracellular matrix.</text>
</comment>
<comment type="PTM">
    <text evidence="4">Extensively modified by glycosaminoglycan groups (GAG).</text>
</comment>
<comment type="PTM">
    <text evidence="4">Phosphorylated in the cytoplasmic domain by the type II receptor TGFBR2 at THR-837 to mediate recruitment of ARRB2 and subsequent internalization of TGFBR2 and TGFBR3.</text>
</comment>
<keyword id="KW-1003">Cell membrane</keyword>
<keyword id="KW-1015">Disulfide bond</keyword>
<keyword id="KW-0272">Extracellular matrix</keyword>
<keyword id="KW-0325">Glycoprotein</keyword>
<keyword id="KW-0472">Membrane</keyword>
<keyword id="KW-0597">Phosphoprotein</keyword>
<keyword id="KW-0654">Proteoglycan</keyword>
<keyword id="KW-0675">Receptor</keyword>
<keyword id="KW-1185">Reference proteome</keyword>
<keyword id="KW-0964">Secreted</keyword>
<keyword id="KW-0732">Signal</keyword>
<keyword id="KW-0812">Transmembrane</keyword>
<keyword id="KW-1133">Transmembrane helix</keyword>
<feature type="signal peptide" evidence="5">
    <location>
        <begin position="1"/>
        <end position="20"/>
    </location>
</feature>
<feature type="chain" id="PRO_0000041665" description="Transforming growth factor beta receptor type 3">
    <location>
        <begin position="21"/>
        <end position="848"/>
    </location>
</feature>
<feature type="topological domain" description="Extracellular" evidence="5">
    <location>
        <begin position="21"/>
        <end position="784"/>
    </location>
</feature>
<feature type="transmembrane region" description="Helical" evidence="5">
    <location>
        <begin position="785"/>
        <end position="806"/>
    </location>
</feature>
<feature type="topological domain" description="Cytoplasmic" evidence="5">
    <location>
        <begin position="807"/>
        <end position="848"/>
    </location>
</feature>
<feature type="domain" description="ZP" evidence="6">
    <location>
        <begin position="454"/>
        <end position="729"/>
    </location>
</feature>
<feature type="region of interest" description="Disordered" evidence="7">
    <location>
        <begin position="390"/>
        <end position="448"/>
    </location>
</feature>
<feature type="region of interest" description="Interaction with TGF-beta ligand" evidence="1">
    <location>
        <begin position="736"/>
        <end position="750"/>
    </location>
</feature>
<feature type="region of interest" description="Disordered" evidence="7">
    <location>
        <begin position="813"/>
        <end position="848"/>
    </location>
</feature>
<feature type="compositionally biased region" description="Basic and acidic residues" evidence="7">
    <location>
        <begin position="411"/>
        <end position="425"/>
    </location>
</feature>
<feature type="compositionally biased region" description="Low complexity" evidence="7">
    <location>
        <begin position="833"/>
        <end position="848"/>
    </location>
</feature>
<feature type="modified residue" description="Phosphothreonine" evidence="4">
    <location>
        <position position="837"/>
    </location>
</feature>
<feature type="glycosylation site" description="N-linked (GlcNAc...) asparagine" evidence="5">
    <location>
        <position position="34"/>
    </location>
</feature>
<feature type="glycosylation site" description="N-linked (GlcNAc...) asparagine" evidence="5">
    <location>
        <position position="141"/>
    </location>
</feature>
<feature type="glycosylation site" description="N-linked (GlcNAc...) asparagine" evidence="5">
    <location>
        <position position="491"/>
    </location>
</feature>
<feature type="glycosylation site" description="O-linked (Xyl...) (glycosaminoglycan) serine" evidence="5">
    <location>
        <position position="529"/>
    </location>
</feature>
<feature type="glycosylation site" description="O-linked (Xyl...) (glycosaminoglycan) serine" evidence="1">
    <location>
        <position position="533"/>
    </location>
</feature>
<feature type="glycosylation site" description="O-linked (Xyl...) (glycosaminoglycan) serine" evidence="1">
    <location>
        <position position="544"/>
    </location>
</feature>
<feature type="glycosylation site" description="N-linked (GlcNAc...) asparagine" evidence="5">
    <location>
        <position position="570"/>
    </location>
</feature>
<feature type="glycosylation site" description="N-linked (GlcNAc...) asparagine" evidence="5">
    <location>
        <position position="589"/>
    </location>
</feature>
<feature type="glycosylation site" description="N-linked (GlcNAc...) asparagine" evidence="5">
    <location>
        <position position="696"/>
    </location>
</feature>
<feature type="disulfide bond" evidence="4">
    <location>
        <begin position="52"/>
        <end position="197"/>
    </location>
</feature>
<feature type="disulfide bond" evidence="3">
    <location>
        <begin position="638"/>
        <end position="704"/>
    </location>
</feature>
<feature type="disulfide bond" evidence="3">
    <location>
        <begin position="659"/>
        <end position="729"/>
    </location>
</feature>
<feature type="disulfide bond" evidence="2">
    <location>
        <begin position="709"/>
        <end position="722"/>
    </location>
</feature>
<proteinExistence type="evidence at transcript level"/>
<protein>
    <recommendedName>
        <fullName>Transforming growth factor beta receptor type 3</fullName>
        <shortName>TGF-beta receptor type 3</shortName>
        <shortName>TGFR-3</shortName>
    </recommendedName>
    <alternativeName>
        <fullName>Betaglycan</fullName>
    </alternativeName>
    <alternativeName>
        <fullName>Transforming growth factor beta receptor III</fullName>
        <shortName>TGF-beta receptor type III</shortName>
    </alternativeName>
</protein>
<gene>
    <name type="primary">TGFBR3</name>
</gene>
<name>TGBR3_PIG</name>
<organism>
    <name type="scientific">Sus scrofa</name>
    <name type="common">Pig</name>
    <dbReference type="NCBI Taxonomy" id="9823"/>
    <lineage>
        <taxon>Eukaryota</taxon>
        <taxon>Metazoa</taxon>
        <taxon>Chordata</taxon>
        <taxon>Craniata</taxon>
        <taxon>Vertebrata</taxon>
        <taxon>Euteleostomi</taxon>
        <taxon>Mammalia</taxon>
        <taxon>Eutheria</taxon>
        <taxon>Laurasiatheria</taxon>
        <taxon>Artiodactyla</taxon>
        <taxon>Suina</taxon>
        <taxon>Suidae</taxon>
        <taxon>Sus</taxon>
    </lineage>
</organism>
<sequence length="848" mass="93005">MTLHCVVALFALISSCLATAGPEPGVQCALSPVNASHPVQALMESFTVLSGCASRGTMGRPQEVHVLNLRAADQGPGQRQSEVTLHLNPISSVHIHHKPVVFLLNSPQPLVWHLKTERLAVGVSRLFLVSEGSVVHFSSGNFSLSAETEERNFPHGNEHLLNWARKEYGAVTSFTELKIARNIYIKVGEDQVFPPTCSIGKNFLSLNYLAEYLQPKPAEGCVVSGRPQEKEVHIIELIAPNSNPYSAFQVDIIIDIRPSRKDPELVKNLILILKCKKSVNWVIKSFDVKGNLKVLAPNSIGFGRESERSMIMTKSVRDDIPSTQEKLLRWALDNGYSPVTSYTVAPVANRFHLRLENNEEMRDEEVHTIPPELQILLDPGALPVLDHPPSGEGAARHGGLPFPFPYIPRRGRQDGGKDRLPRPKDPVVPSIQLLPGPREPQEAQGSRDVALSVRCDSEKMLVAVEKDSFQASGYPGLELTLLDPTCKAKTNGTHFILESPLDGCGTRHRRSAPDGVVYYNSIVIQAPPSGDSSGWPDGYEDLESGDNGFPGDVDEGDVALSSRPELVVFNCSLRPARHPSRAQDPPTRNVTFSMDLYTTDLFLAPAQGVFSVAENGHVYVEVSVTKADQELGFAIQTCFISPYSNPDRMSDYTIIENICPKDESVKFYDPKRVHFPIPQAETDKKRFSFVFKPVFNTSLLFLQCELTLCTKREKEPQKLPKCVLPDEACTSLDASMIWAMMQNKKTFTKPLAVIHHEVQFKGPSTKESNPISPPIFHGLDTLTVMGIAFAAFVIGALLTGALWYIYSHTGDSAGRQPVPTSPPASENSSAAHSLGSTQSTPCSSSSAA</sequence>
<evidence type="ECO:0000250" key="1"/>
<evidence type="ECO:0000250" key="2">
    <source>
        <dbReference type="UniProtKB" id="O88393"/>
    </source>
</evidence>
<evidence type="ECO:0000250" key="3">
    <source>
        <dbReference type="UniProtKB" id="P26342"/>
    </source>
</evidence>
<evidence type="ECO:0000250" key="4">
    <source>
        <dbReference type="UniProtKB" id="Q03167"/>
    </source>
</evidence>
<evidence type="ECO:0000255" key="5"/>
<evidence type="ECO:0000255" key="6">
    <source>
        <dbReference type="PROSITE-ProRule" id="PRU00375"/>
    </source>
</evidence>
<evidence type="ECO:0000256" key="7">
    <source>
        <dbReference type="SAM" id="MobiDB-lite"/>
    </source>
</evidence>
<dbReference type="EMBL" id="L07595">
    <property type="protein sequence ID" value="AAA31126.1"/>
    <property type="molecule type" value="mRNA"/>
</dbReference>
<dbReference type="PIR" id="JC1351">
    <property type="entry name" value="JC1351"/>
</dbReference>
<dbReference type="RefSeq" id="NP_999437.1">
    <property type="nucleotide sequence ID" value="NM_214272.1"/>
</dbReference>
<dbReference type="SMR" id="P35054"/>
<dbReference type="FunCoup" id="P35054">
    <property type="interactions" value="167"/>
</dbReference>
<dbReference type="STRING" id="9823.ENSSSCP00000070390"/>
<dbReference type="GlyCosmos" id="P35054">
    <property type="glycosylation" value="9 sites, No reported glycans"/>
</dbReference>
<dbReference type="GlyGen" id="P35054">
    <property type="glycosylation" value="9 sites"/>
</dbReference>
<dbReference type="PaxDb" id="9823-ENSSSCP00000028383"/>
<dbReference type="GeneID" id="397512"/>
<dbReference type="KEGG" id="ssc:397512"/>
<dbReference type="CTD" id="7049"/>
<dbReference type="eggNOG" id="ENOG502QWNZ">
    <property type="taxonomic scope" value="Eukaryota"/>
</dbReference>
<dbReference type="InParanoid" id="P35054"/>
<dbReference type="OrthoDB" id="6420824at2759"/>
<dbReference type="Proteomes" id="UP000008227">
    <property type="component" value="Unplaced"/>
</dbReference>
<dbReference type="Proteomes" id="UP000314985">
    <property type="component" value="Unplaced"/>
</dbReference>
<dbReference type="Proteomes" id="UP000694570">
    <property type="component" value="Unplaced"/>
</dbReference>
<dbReference type="Proteomes" id="UP000694571">
    <property type="component" value="Unplaced"/>
</dbReference>
<dbReference type="Proteomes" id="UP000694720">
    <property type="component" value="Unplaced"/>
</dbReference>
<dbReference type="Proteomes" id="UP000694722">
    <property type="component" value="Unplaced"/>
</dbReference>
<dbReference type="Proteomes" id="UP000694723">
    <property type="component" value="Unplaced"/>
</dbReference>
<dbReference type="Proteomes" id="UP000694724">
    <property type="component" value="Unplaced"/>
</dbReference>
<dbReference type="Proteomes" id="UP000694725">
    <property type="component" value="Unplaced"/>
</dbReference>
<dbReference type="Proteomes" id="UP000694726">
    <property type="component" value="Unplaced"/>
</dbReference>
<dbReference type="Proteomes" id="UP000694727">
    <property type="component" value="Unplaced"/>
</dbReference>
<dbReference type="Proteomes" id="UP000694728">
    <property type="component" value="Unplaced"/>
</dbReference>
<dbReference type="GO" id="GO:0062023">
    <property type="term" value="C:collagen-containing extracellular matrix"/>
    <property type="evidence" value="ECO:0000304"/>
    <property type="project" value="BHF-UCL"/>
</dbReference>
<dbReference type="GO" id="GO:0009897">
    <property type="term" value="C:external side of plasma membrane"/>
    <property type="evidence" value="ECO:0000250"/>
    <property type="project" value="BHF-UCL"/>
</dbReference>
<dbReference type="GO" id="GO:0005576">
    <property type="term" value="C:extracellular region"/>
    <property type="evidence" value="ECO:0007669"/>
    <property type="project" value="UniProtKB-SubCell"/>
</dbReference>
<dbReference type="GO" id="GO:0016020">
    <property type="term" value="C:membrane"/>
    <property type="evidence" value="ECO:0000250"/>
    <property type="project" value="BHF-UCL"/>
</dbReference>
<dbReference type="GO" id="GO:0015026">
    <property type="term" value="F:coreceptor activity"/>
    <property type="evidence" value="ECO:0000250"/>
    <property type="project" value="BHF-UCL"/>
</dbReference>
<dbReference type="GO" id="GO:0005539">
    <property type="term" value="F:glycosaminoglycan binding"/>
    <property type="evidence" value="ECO:0000318"/>
    <property type="project" value="GO_Central"/>
</dbReference>
<dbReference type="GO" id="GO:0008201">
    <property type="term" value="F:heparin binding"/>
    <property type="evidence" value="ECO:0000250"/>
    <property type="project" value="BHF-UCL"/>
</dbReference>
<dbReference type="GO" id="GO:0050431">
    <property type="term" value="F:transforming growth factor beta binding"/>
    <property type="evidence" value="ECO:0000250"/>
    <property type="project" value="BHF-UCL"/>
</dbReference>
<dbReference type="GO" id="GO:0005024">
    <property type="term" value="F:transforming growth factor beta receptor activity"/>
    <property type="evidence" value="ECO:0000250"/>
    <property type="project" value="BHF-UCL"/>
</dbReference>
<dbReference type="GO" id="GO:0070123">
    <property type="term" value="F:transforming growth factor beta receptor activity, type III"/>
    <property type="evidence" value="ECO:0000250"/>
    <property type="project" value="BHF-UCL"/>
</dbReference>
<dbReference type="GO" id="GO:0005160">
    <property type="term" value="F:transforming growth factor beta receptor binding"/>
    <property type="evidence" value="ECO:0000250"/>
    <property type="project" value="BHF-UCL"/>
</dbReference>
<dbReference type="GO" id="GO:0005114">
    <property type="term" value="F:type II transforming growth factor beta receptor binding"/>
    <property type="evidence" value="ECO:0000318"/>
    <property type="project" value="GO_Central"/>
</dbReference>
<dbReference type="GO" id="GO:0030509">
    <property type="term" value="P:BMP signaling pathway"/>
    <property type="evidence" value="ECO:0000250"/>
    <property type="project" value="BHF-UCL"/>
</dbReference>
<dbReference type="GO" id="GO:0016477">
    <property type="term" value="P:cell migration"/>
    <property type="evidence" value="ECO:0000318"/>
    <property type="project" value="GO_Central"/>
</dbReference>
<dbReference type="GO" id="GO:0001837">
    <property type="term" value="P:epithelial to mesenchymal transition"/>
    <property type="evidence" value="ECO:0000250"/>
    <property type="project" value="BHF-UCL"/>
</dbReference>
<dbReference type="GO" id="GO:0006955">
    <property type="term" value="P:immune response"/>
    <property type="evidence" value="ECO:0000250"/>
    <property type="project" value="BHF-UCL"/>
</dbReference>
<dbReference type="GO" id="GO:0035556">
    <property type="term" value="P:intracellular signal transduction"/>
    <property type="evidence" value="ECO:0000250"/>
    <property type="project" value="BHF-UCL"/>
</dbReference>
<dbReference type="GO" id="GO:0017015">
    <property type="term" value="P:regulation of transforming growth factor beta receptor signaling pathway"/>
    <property type="evidence" value="ECO:0000318"/>
    <property type="project" value="GO_Central"/>
</dbReference>
<dbReference type="GO" id="GO:0032354">
    <property type="term" value="P:response to follicle-stimulating hormone"/>
    <property type="evidence" value="ECO:0000250"/>
    <property type="project" value="BHF-UCL"/>
</dbReference>
<dbReference type="GO" id="GO:0007165">
    <property type="term" value="P:signal transduction"/>
    <property type="evidence" value="ECO:0000303"/>
    <property type="project" value="BHF-UCL"/>
</dbReference>
<dbReference type="GO" id="GO:0007179">
    <property type="term" value="P:transforming growth factor beta receptor signaling pathway"/>
    <property type="evidence" value="ECO:0000250"/>
    <property type="project" value="BHF-UCL"/>
</dbReference>
<dbReference type="FunFam" id="2.60.40.3210:FF:000008">
    <property type="entry name" value="Transforming growth factor beta receptor 3"/>
    <property type="match status" value="1"/>
</dbReference>
<dbReference type="FunFam" id="2.60.40.4100:FF:000003">
    <property type="entry name" value="Transforming growth factor beta receptor type 3"/>
    <property type="match status" value="1"/>
</dbReference>
<dbReference type="Gene3D" id="2.60.40.4100">
    <property type="entry name" value="Zona pellucida, ZP-C domain"/>
    <property type="match status" value="1"/>
</dbReference>
<dbReference type="Gene3D" id="2.60.40.3210">
    <property type="entry name" value="Zona pellucida, ZP-N domain"/>
    <property type="match status" value="1"/>
</dbReference>
<dbReference type="InterPro" id="IPR055355">
    <property type="entry name" value="ZP-C"/>
</dbReference>
<dbReference type="InterPro" id="IPR042235">
    <property type="entry name" value="ZP-C_dom"/>
</dbReference>
<dbReference type="InterPro" id="IPR055356">
    <property type="entry name" value="ZP-N"/>
</dbReference>
<dbReference type="InterPro" id="IPR048290">
    <property type="entry name" value="ZP_chr"/>
</dbReference>
<dbReference type="InterPro" id="IPR001507">
    <property type="entry name" value="ZP_dom"/>
</dbReference>
<dbReference type="InterPro" id="IPR017977">
    <property type="entry name" value="ZP_dom_CS"/>
</dbReference>
<dbReference type="PANTHER" id="PTHR14002">
    <property type="entry name" value="ENDOGLIN/TGF-BETA RECEPTOR TYPE III"/>
    <property type="match status" value="1"/>
</dbReference>
<dbReference type="PANTHER" id="PTHR14002:SF7">
    <property type="entry name" value="TRANSFORMING GROWTH FACTOR BETA RECEPTOR TYPE 3"/>
    <property type="match status" value="1"/>
</dbReference>
<dbReference type="Pfam" id="PF00100">
    <property type="entry name" value="Zona_pellucida"/>
    <property type="match status" value="1"/>
</dbReference>
<dbReference type="Pfam" id="PF23344">
    <property type="entry name" value="ZP-N"/>
    <property type="match status" value="1"/>
</dbReference>
<dbReference type="PRINTS" id="PR00023">
    <property type="entry name" value="ZPELLUCIDA"/>
</dbReference>
<dbReference type="SMART" id="SM00241">
    <property type="entry name" value="ZP"/>
    <property type="match status" value="1"/>
</dbReference>
<dbReference type="PROSITE" id="PS00682">
    <property type="entry name" value="ZP_1"/>
    <property type="match status" value="1"/>
</dbReference>
<dbReference type="PROSITE" id="PS51034">
    <property type="entry name" value="ZP_2"/>
    <property type="match status" value="1"/>
</dbReference>
<accession>P35054</accession>
<reference key="1">
    <citation type="journal article" date="1992" name="Biochem. Biophys. Res. Commun.">
        <title>Molecular cloning and characterization of the human and porcine transforming growth factor-beta type III receptors.</title>
        <authorList>
            <person name="Moren A."/>
            <person name="Ichijo H."/>
            <person name="Miyazono K."/>
        </authorList>
    </citation>
    <scope>NUCLEOTIDE SEQUENCE [MRNA]</scope>
    <source>
        <tissue>Uterus</tissue>
    </source>
</reference>